<accession>Q3KLJ7</accession>
<feature type="chain" id="PRO_0000226553" description="Nucleoside diphosphate kinase">
    <location>
        <begin position="1"/>
        <end position="141"/>
    </location>
</feature>
<feature type="active site" description="Pros-phosphohistidine intermediate" evidence="1">
    <location>
        <position position="115"/>
    </location>
</feature>
<feature type="binding site" evidence="1">
    <location>
        <position position="9"/>
    </location>
    <ligand>
        <name>ATP</name>
        <dbReference type="ChEBI" id="CHEBI:30616"/>
    </ligand>
</feature>
<feature type="binding site" evidence="1">
    <location>
        <position position="57"/>
    </location>
    <ligand>
        <name>ATP</name>
        <dbReference type="ChEBI" id="CHEBI:30616"/>
    </ligand>
</feature>
<feature type="binding site" evidence="1">
    <location>
        <position position="85"/>
    </location>
    <ligand>
        <name>ATP</name>
        <dbReference type="ChEBI" id="CHEBI:30616"/>
    </ligand>
</feature>
<feature type="binding site" evidence="1">
    <location>
        <position position="91"/>
    </location>
    <ligand>
        <name>ATP</name>
        <dbReference type="ChEBI" id="CHEBI:30616"/>
    </ligand>
</feature>
<feature type="binding site" evidence="1">
    <location>
        <position position="102"/>
    </location>
    <ligand>
        <name>ATP</name>
        <dbReference type="ChEBI" id="CHEBI:30616"/>
    </ligand>
</feature>
<feature type="binding site" evidence="1">
    <location>
        <position position="112"/>
    </location>
    <ligand>
        <name>ATP</name>
        <dbReference type="ChEBI" id="CHEBI:30616"/>
    </ligand>
</feature>
<evidence type="ECO:0000255" key="1">
    <source>
        <dbReference type="HAMAP-Rule" id="MF_00451"/>
    </source>
</evidence>
<gene>
    <name evidence="1" type="primary">ndk</name>
    <name type="ordered locus">CTA_0548</name>
</gene>
<dbReference type="EC" id="2.7.4.6" evidence="1"/>
<dbReference type="EMBL" id="CP000051">
    <property type="protein sequence ID" value="AAX50775.1"/>
    <property type="molecule type" value="Genomic_DNA"/>
</dbReference>
<dbReference type="RefSeq" id="WP_009871864.1">
    <property type="nucleotide sequence ID" value="NC_007429.1"/>
</dbReference>
<dbReference type="SMR" id="Q3KLJ7"/>
<dbReference type="KEGG" id="cta:CTA_0548"/>
<dbReference type="HOGENOM" id="CLU_060216_8_1_0"/>
<dbReference type="Proteomes" id="UP000002532">
    <property type="component" value="Chromosome"/>
</dbReference>
<dbReference type="GO" id="GO:0005737">
    <property type="term" value="C:cytoplasm"/>
    <property type="evidence" value="ECO:0007669"/>
    <property type="project" value="UniProtKB-SubCell"/>
</dbReference>
<dbReference type="GO" id="GO:0005524">
    <property type="term" value="F:ATP binding"/>
    <property type="evidence" value="ECO:0007669"/>
    <property type="project" value="UniProtKB-UniRule"/>
</dbReference>
<dbReference type="GO" id="GO:0046872">
    <property type="term" value="F:metal ion binding"/>
    <property type="evidence" value="ECO:0007669"/>
    <property type="project" value="UniProtKB-KW"/>
</dbReference>
<dbReference type="GO" id="GO:0004550">
    <property type="term" value="F:nucleoside diphosphate kinase activity"/>
    <property type="evidence" value="ECO:0007669"/>
    <property type="project" value="UniProtKB-UniRule"/>
</dbReference>
<dbReference type="GO" id="GO:0006241">
    <property type="term" value="P:CTP biosynthetic process"/>
    <property type="evidence" value="ECO:0007669"/>
    <property type="project" value="UniProtKB-UniRule"/>
</dbReference>
<dbReference type="GO" id="GO:0006183">
    <property type="term" value="P:GTP biosynthetic process"/>
    <property type="evidence" value="ECO:0007669"/>
    <property type="project" value="UniProtKB-UniRule"/>
</dbReference>
<dbReference type="GO" id="GO:0006228">
    <property type="term" value="P:UTP biosynthetic process"/>
    <property type="evidence" value="ECO:0007669"/>
    <property type="project" value="UniProtKB-UniRule"/>
</dbReference>
<dbReference type="CDD" id="cd04413">
    <property type="entry name" value="NDPk_I"/>
    <property type="match status" value="1"/>
</dbReference>
<dbReference type="FunFam" id="3.30.70.141:FF:000001">
    <property type="entry name" value="Nucleoside diphosphate kinase"/>
    <property type="match status" value="1"/>
</dbReference>
<dbReference type="Gene3D" id="3.30.70.141">
    <property type="entry name" value="Nucleoside diphosphate kinase-like domain"/>
    <property type="match status" value="1"/>
</dbReference>
<dbReference type="HAMAP" id="MF_00451">
    <property type="entry name" value="NDP_kinase"/>
    <property type="match status" value="1"/>
</dbReference>
<dbReference type="InterPro" id="IPR034907">
    <property type="entry name" value="NDK-like_dom"/>
</dbReference>
<dbReference type="InterPro" id="IPR036850">
    <property type="entry name" value="NDK-like_dom_sf"/>
</dbReference>
<dbReference type="InterPro" id="IPR001564">
    <property type="entry name" value="Nucleoside_diP_kinase"/>
</dbReference>
<dbReference type="InterPro" id="IPR023005">
    <property type="entry name" value="Nucleoside_diP_kinase_AS"/>
</dbReference>
<dbReference type="NCBIfam" id="NF001908">
    <property type="entry name" value="PRK00668.1"/>
    <property type="match status" value="1"/>
</dbReference>
<dbReference type="PANTHER" id="PTHR46161">
    <property type="entry name" value="NUCLEOSIDE DIPHOSPHATE KINASE"/>
    <property type="match status" value="1"/>
</dbReference>
<dbReference type="PANTHER" id="PTHR46161:SF3">
    <property type="entry name" value="NUCLEOSIDE DIPHOSPHATE KINASE DDB_G0292928-RELATED"/>
    <property type="match status" value="1"/>
</dbReference>
<dbReference type="Pfam" id="PF00334">
    <property type="entry name" value="NDK"/>
    <property type="match status" value="1"/>
</dbReference>
<dbReference type="PRINTS" id="PR01243">
    <property type="entry name" value="NUCDPKINASE"/>
</dbReference>
<dbReference type="SMART" id="SM00562">
    <property type="entry name" value="NDK"/>
    <property type="match status" value="1"/>
</dbReference>
<dbReference type="SUPFAM" id="SSF54919">
    <property type="entry name" value="Nucleoside diphosphate kinase, NDK"/>
    <property type="match status" value="1"/>
</dbReference>
<dbReference type="PROSITE" id="PS00469">
    <property type="entry name" value="NDPK"/>
    <property type="match status" value="1"/>
</dbReference>
<dbReference type="PROSITE" id="PS51374">
    <property type="entry name" value="NDPK_LIKE"/>
    <property type="match status" value="1"/>
</dbReference>
<reference key="1">
    <citation type="journal article" date="2005" name="Infect. Immun.">
        <title>Comparative genomic analysis of Chlamydia trachomatis oculotropic and genitotropic strains.</title>
        <authorList>
            <person name="Carlson J.H."/>
            <person name="Porcella S.F."/>
            <person name="McClarty G."/>
            <person name="Caldwell H.D."/>
        </authorList>
    </citation>
    <scope>NUCLEOTIDE SEQUENCE [LARGE SCALE GENOMIC DNA]</scope>
    <source>
        <strain>ATCC VR-571B / DSM 19440 / HAR-13</strain>
    </source>
</reference>
<protein>
    <recommendedName>
        <fullName evidence="1">Nucleoside diphosphate kinase</fullName>
        <shortName evidence="1">NDK</shortName>
        <shortName evidence="1">NDP kinase</shortName>
        <ecNumber evidence="1">2.7.4.6</ecNumber>
    </recommendedName>
    <alternativeName>
        <fullName evidence="1">Nucleoside-2-P kinase</fullName>
    </alternativeName>
</protein>
<name>NDK_CHLTA</name>
<comment type="function">
    <text evidence="1">Major role in the synthesis of nucleoside triphosphates other than ATP. The ATP gamma phosphate is transferred to the NDP beta phosphate via a ping-pong mechanism, using a phosphorylated active-site intermediate.</text>
</comment>
<comment type="catalytic activity">
    <reaction evidence="1">
        <text>a 2'-deoxyribonucleoside 5'-diphosphate + ATP = a 2'-deoxyribonucleoside 5'-triphosphate + ADP</text>
        <dbReference type="Rhea" id="RHEA:44640"/>
        <dbReference type="ChEBI" id="CHEBI:30616"/>
        <dbReference type="ChEBI" id="CHEBI:61560"/>
        <dbReference type="ChEBI" id="CHEBI:73316"/>
        <dbReference type="ChEBI" id="CHEBI:456216"/>
        <dbReference type="EC" id="2.7.4.6"/>
    </reaction>
</comment>
<comment type="catalytic activity">
    <reaction evidence="1">
        <text>a ribonucleoside 5'-diphosphate + ATP = a ribonucleoside 5'-triphosphate + ADP</text>
        <dbReference type="Rhea" id="RHEA:18113"/>
        <dbReference type="ChEBI" id="CHEBI:30616"/>
        <dbReference type="ChEBI" id="CHEBI:57930"/>
        <dbReference type="ChEBI" id="CHEBI:61557"/>
        <dbReference type="ChEBI" id="CHEBI:456216"/>
        <dbReference type="EC" id="2.7.4.6"/>
    </reaction>
</comment>
<comment type="cofactor">
    <cofactor evidence="1">
        <name>Mg(2+)</name>
        <dbReference type="ChEBI" id="CHEBI:18420"/>
    </cofactor>
</comment>
<comment type="subunit">
    <text evidence="1">Homotetramer.</text>
</comment>
<comment type="subcellular location">
    <subcellularLocation>
        <location evidence="1">Cytoplasm</location>
    </subcellularLocation>
</comment>
<comment type="similarity">
    <text evidence="1">Belongs to the NDK family.</text>
</comment>
<proteinExistence type="inferred from homology"/>
<keyword id="KW-0067">ATP-binding</keyword>
<keyword id="KW-0963">Cytoplasm</keyword>
<keyword id="KW-0418">Kinase</keyword>
<keyword id="KW-0460">Magnesium</keyword>
<keyword id="KW-0479">Metal-binding</keyword>
<keyword id="KW-0546">Nucleotide metabolism</keyword>
<keyword id="KW-0547">Nucleotide-binding</keyword>
<keyword id="KW-0597">Phosphoprotein</keyword>
<keyword id="KW-0808">Transferase</keyword>
<organism>
    <name type="scientific">Chlamydia trachomatis serovar A (strain ATCC VR-571B / DSM 19440 / HAR-13)</name>
    <dbReference type="NCBI Taxonomy" id="315277"/>
    <lineage>
        <taxon>Bacteria</taxon>
        <taxon>Pseudomonadati</taxon>
        <taxon>Chlamydiota</taxon>
        <taxon>Chlamydiia</taxon>
        <taxon>Chlamydiales</taxon>
        <taxon>Chlamydiaceae</taxon>
        <taxon>Chlamydia/Chlamydophila group</taxon>
        <taxon>Chlamydia</taxon>
    </lineage>
</organism>
<sequence length="141" mass="15279">MEQTLSIIKPDSVGKAHIGEIIAIFEKSGLRIAAMKMVHLSVKEAEGFYVVHKERPFFQELVDFMISGPVVVMVLQGENAVARNRELMGATNPKEAAEGSIRALFGESIGVNAVHGSDSLENAAIEVSYFFAKTEIVNSVA</sequence>